<dbReference type="EC" id="4.3.1.3" evidence="1"/>
<dbReference type="EMBL" id="CP000613">
    <property type="protein sequence ID" value="ACJ00600.1"/>
    <property type="molecule type" value="Genomic_DNA"/>
</dbReference>
<dbReference type="RefSeq" id="WP_012568379.1">
    <property type="nucleotide sequence ID" value="NC_011420.2"/>
</dbReference>
<dbReference type="SMR" id="B6IWC6"/>
<dbReference type="STRING" id="414684.RC1_3238"/>
<dbReference type="KEGG" id="rce:RC1_3238"/>
<dbReference type="eggNOG" id="COG2986">
    <property type="taxonomic scope" value="Bacteria"/>
</dbReference>
<dbReference type="HOGENOM" id="CLU_014801_4_0_5"/>
<dbReference type="OrthoDB" id="9806955at2"/>
<dbReference type="UniPathway" id="UPA00379">
    <property type="reaction ID" value="UER00549"/>
</dbReference>
<dbReference type="Proteomes" id="UP000001591">
    <property type="component" value="Chromosome"/>
</dbReference>
<dbReference type="GO" id="GO:0005737">
    <property type="term" value="C:cytoplasm"/>
    <property type="evidence" value="ECO:0007669"/>
    <property type="project" value="UniProtKB-SubCell"/>
</dbReference>
<dbReference type="GO" id="GO:0004397">
    <property type="term" value="F:histidine ammonia-lyase activity"/>
    <property type="evidence" value="ECO:0007669"/>
    <property type="project" value="UniProtKB-UniRule"/>
</dbReference>
<dbReference type="GO" id="GO:0019556">
    <property type="term" value="P:L-histidine catabolic process to glutamate and formamide"/>
    <property type="evidence" value="ECO:0007669"/>
    <property type="project" value="UniProtKB-UniPathway"/>
</dbReference>
<dbReference type="GO" id="GO:0019557">
    <property type="term" value="P:L-histidine catabolic process to glutamate and formate"/>
    <property type="evidence" value="ECO:0007669"/>
    <property type="project" value="UniProtKB-UniPathway"/>
</dbReference>
<dbReference type="CDD" id="cd00332">
    <property type="entry name" value="PAL-HAL"/>
    <property type="match status" value="1"/>
</dbReference>
<dbReference type="FunFam" id="1.10.275.10:FF:000005">
    <property type="entry name" value="Histidine ammonia-lyase"/>
    <property type="match status" value="1"/>
</dbReference>
<dbReference type="FunFam" id="1.20.200.10:FF:000003">
    <property type="entry name" value="Histidine ammonia-lyase"/>
    <property type="match status" value="1"/>
</dbReference>
<dbReference type="Gene3D" id="1.20.200.10">
    <property type="entry name" value="Fumarase/aspartase (Central domain)"/>
    <property type="match status" value="1"/>
</dbReference>
<dbReference type="Gene3D" id="1.10.275.10">
    <property type="entry name" value="Fumarase/aspartase (N-terminal domain)"/>
    <property type="match status" value="1"/>
</dbReference>
<dbReference type="HAMAP" id="MF_00229">
    <property type="entry name" value="His_ammonia_lyase"/>
    <property type="match status" value="1"/>
</dbReference>
<dbReference type="InterPro" id="IPR001106">
    <property type="entry name" value="Aromatic_Lyase"/>
</dbReference>
<dbReference type="InterPro" id="IPR024083">
    <property type="entry name" value="Fumarase/histidase_N"/>
</dbReference>
<dbReference type="InterPro" id="IPR005921">
    <property type="entry name" value="HutH"/>
</dbReference>
<dbReference type="InterPro" id="IPR008948">
    <property type="entry name" value="L-Aspartase-like"/>
</dbReference>
<dbReference type="InterPro" id="IPR022313">
    <property type="entry name" value="Phe/His_NH3-lyase_AS"/>
</dbReference>
<dbReference type="NCBIfam" id="TIGR01225">
    <property type="entry name" value="hutH"/>
    <property type="match status" value="1"/>
</dbReference>
<dbReference type="NCBIfam" id="NF006871">
    <property type="entry name" value="PRK09367.1"/>
    <property type="match status" value="1"/>
</dbReference>
<dbReference type="PANTHER" id="PTHR10362">
    <property type="entry name" value="HISTIDINE AMMONIA-LYASE"/>
    <property type="match status" value="1"/>
</dbReference>
<dbReference type="Pfam" id="PF00221">
    <property type="entry name" value="Lyase_aromatic"/>
    <property type="match status" value="1"/>
</dbReference>
<dbReference type="SUPFAM" id="SSF48557">
    <property type="entry name" value="L-aspartase-like"/>
    <property type="match status" value="1"/>
</dbReference>
<dbReference type="PROSITE" id="PS00488">
    <property type="entry name" value="PAL_HISTIDASE"/>
    <property type="match status" value="1"/>
</dbReference>
<sequence length="509" mass="52618">MTETLRLTPAGLTLADLRRVLAGPVRLEIAPRDLEAAEASARTVAEVIGSGRTVYGINTGFGLLARTRIEPDRLAQLQRNLVLSHAAGTGEAMPDRVVRLMLVLKVASLLRGFSGVRGEVIRALAALVSAEALPLVPAKGSVGASGDLAPLAHLVLPLLGLGQVRLAGRTVPAADGLAAAGLRPLELGPKEGLALLNGTQASTALALAGLVAAEWAFDAALVAGALSIDAAQGSDTPFDARIHALRGQRGQIDAAAGYRRLLAGSPIRASHLSCARVQDPYCLRCQPQVMGACLDQLRFAAGTLATEANAVTDNPLVFPDDGDILSGGNFHAEPVAMAADQIALALAEIGSLSERRTAMLVDPHHNGGLPAFLVTDGGLNSGFMIAQVTAAALASENKGLAHPASVDSIPTSANQEDHVSMATWAARRLLEMADNAAGIVAVELLAACQGIDFRRPLRTSAPLEAVHAAVREEVGFYDRDRHFAPDIEAARGLIAAGRAASGTDWLAAA</sequence>
<protein>
    <recommendedName>
        <fullName evidence="1">Histidine ammonia-lyase</fullName>
        <shortName evidence="1">Histidase</shortName>
        <ecNumber evidence="1">4.3.1.3</ecNumber>
    </recommendedName>
</protein>
<accession>B6IWC6</accession>
<name>HUTH_RHOCS</name>
<evidence type="ECO:0000255" key="1">
    <source>
        <dbReference type="HAMAP-Rule" id="MF_00229"/>
    </source>
</evidence>
<organism>
    <name type="scientific">Rhodospirillum centenum (strain ATCC 51521 / SW)</name>
    <dbReference type="NCBI Taxonomy" id="414684"/>
    <lineage>
        <taxon>Bacteria</taxon>
        <taxon>Pseudomonadati</taxon>
        <taxon>Pseudomonadota</taxon>
        <taxon>Alphaproteobacteria</taxon>
        <taxon>Rhodospirillales</taxon>
        <taxon>Rhodospirillaceae</taxon>
        <taxon>Rhodospirillum</taxon>
    </lineage>
</organism>
<keyword id="KW-0963">Cytoplasm</keyword>
<keyword id="KW-0369">Histidine metabolism</keyword>
<keyword id="KW-0456">Lyase</keyword>
<keyword id="KW-1185">Reference proteome</keyword>
<proteinExistence type="inferred from homology"/>
<feature type="chain" id="PRO_1000100445" description="Histidine ammonia-lyase">
    <location>
        <begin position="1"/>
        <end position="509"/>
    </location>
</feature>
<feature type="modified residue" description="2,3-didehydroalanine (Ser)" evidence="1">
    <location>
        <position position="145"/>
    </location>
</feature>
<feature type="cross-link" description="5-imidazolinone (Ala-Gly)" evidence="1">
    <location>
        <begin position="144"/>
        <end position="146"/>
    </location>
</feature>
<comment type="catalytic activity">
    <reaction evidence="1">
        <text>L-histidine = trans-urocanate + NH4(+)</text>
        <dbReference type="Rhea" id="RHEA:21232"/>
        <dbReference type="ChEBI" id="CHEBI:17771"/>
        <dbReference type="ChEBI" id="CHEBI:28938"/>
        <dbReference type="ChEBI" id="CHEBI:57595"/>
        <dbReference type="EC" id="4.3.1.3"/>
    </reaction>
</comment>
<comment type="pathway">
    <text evidence="1">Amino-acid degradation; L-histidine degradation into L-glutamate; N-formimidoyl-L-glutamate from L-histidine: step 1/3.</text>
</comment>
<comment type="subcellular location">
    <subcellularLocation>
        <location evidence="1">Cytoplasm</location>
    </subcellularLocation>
</comment>
<comment type="PTM">
    <text evidence="1">Contains an active site 4-methylidene-imidazol-5-one (MIO), which is formed autocatalytically by cyclization and dehydration of residues Ala-Ser-Gly.</text>
</comment>
<comment type="similarity">
    <text evidence="1">Belongs to the PAL/histidase family.</text>
</comment>
<reference key="1">
    <citation type="submission" date="2007-03" db="EMBL/GenBank/DDBJ databases">
        <title>Genome sequence of Rhodospirillum centenum.</title>
        <authorList>
            <person name="Touchman J.W."/>
            <person name="Bauer C."/>
            <person name="Blankenship R.E."/>
        </authorList>
    </citation>
    <scope>NUCLEOTIDE SEQUENCE [LARGE SCALE GENOMIC DNA]</scope>
    <source>
        <strain>ATCC 51521 / SW</strain>
    </source>
</reference>
<gene>
    <name evidence="1" type="primary">hutH</name>
    <name type="ordered locus">RC1_3238</name>
</gene>